<gene>
    <name evidence="1" type="primary">ndhE</name>
</gene>
<reference key="1">
    <citation type="journal article" date="2005" name="Gene">
        <title>The first complete chloroplast genome sequence of a lycophyte, Huperzia lucidula (Lycopodiaceae).</title>
        <authorList>
            <person name="Wolf P.G."/>
            <person name="Karol K.G."/>
            <person name="Mandoli D.F."/>
            <person name="Kuehl J.V."/>
            <person name="Arumuganathan K."/>
            <person name="Ellis M.W."/>
            <person name="Mishler B.D."/>
            <person name="Kelch D.G."/>
            <person name="Olmstead R.G."/>
            <person name="Boore J.L."/>
        </authorList>
    </citation>
    <scope>NUCLEOTIDE SEQUENCE [LARGE SCALE GENOMIC DNA]</scope>
</reference>
<sequence length="100" mass="11107">MFGHALLLGAFPFCIGIYGLITSRNTVRALMCLELIFNAVNVNFVTFPNYLDIQQIKGEILSVFVIAVAAAEAAIGSAIVLAIYRNRESIRIDQFNLLKW</sequence>
<evidence type="ECO:0000255" key="1">
    <source>
        <dbReference type="HAMAP-Rule" id="MF_01456"/>
    </source>
</evidence>
<comment type="function">
    <text evidence="1">NDH shuttles electrons from NAD(P)H:plastoquinone, via FMN and iron-sulfur (Fe-S) centers, to quinones in the photosynthetic chain and possibly in a chloroplast respiratory chain. The immediate electron acceptor for the enzyme in this species is believed to be plastoquinone. Couples the redox reaction to proton translocation, and thus conserves the redox energy in a proton gradient.</text>
</comment>
<comment type="catalytic activity">
    <reaction evidence="1">
        <text>a plastoquinone + NADH + (n+1) H(+)(in) = a plastoquinol + NAD(+) + n H(+)(out)</text>
        <dbReference type="Rhea" id="RHEA:42608"/>
        <dbReference type="Rhea" id="RHEA-COMP:9561"/>
        <dbReference type="Rhea" id="RHEA-COMP:9562"/>
        <dbReference type="ChEBI" id="CHEBI:15378"/>
        <dbReference type="ChEBI" id="CHEBI:17757"/>
        <dbReference type="ChEBI" id="CHEBI:57540"/>
        <dbReference type="ChEBI" id="CHEBI:57945"/>
        <dbReference type="ChEBI" id="CHEBI:62192"/>
    </reaction>
</comment>
<comment type="catalytic activity">
    <reaction evidence="1">
        <text>a plastoquinone + NADPH + (n+1) H(+)(in) = a plastoquinol + NADP(+) + n H(+)(out)</text>
        <dbReference type="Rhea" id="RHEA:42612"/>
        <dbReference type="Rhea" id="RHEA-COMP:9561"/>
        <dbReference type="Rhea" id="RHEA-COMP:9562"/>
        <dbReference type="ChEBI" id="CHEBI:15378"/>
        <dbReference type="ChEBI" id="CHEBI:17757"/>
        <dbReference type="ChEBI" id="CHEBI:57783"/>
        <dbReference type="ChEBI" id="CHEBI:58349"/>
        <dbReference type="ChEBI" id="CHEBI:62192"/>
    </reaction>
</comment>
<comment type="subunit">
    <text evidence="1">NDH is composed of at least 16 different subunits, 5 of which are encoded in the nucleus.</text>
</comment>
<comment type="subcellular location">
    <subcellularLocation>
        <location evidence="1">Plastid</location>
        <location evidence="1">Chloroplast thylakoid membrane</location>
        <topology evidence="1">Multi-pass membrane protein</topology>
    </subcellularLocation>
</comment>
<comment type="similarity">
    <text evidence="1">Belongs to the complex I subunit 4L family.</text>
</comment>
<accession>Q5SCZ8</accession>
<name>NU4LC_HUPLU</name>
<organism>
    <name type="scientific">Huperzia lucidula</name>
    <name type="common">Shining clubmoss</name>
    <name type="synonym">Lycopodium lucidulum</name>
    <dbReference type="NCBI Taxonomy" id="37429"/>
    <lineage>
        <taxon>Eukaryota</taxon>
        <taxon>Viridiplantae</taxon>
        <taxon>Streptophyta</taxon>
        <taxon>Embryophyta</taxon>
        <taxon>Tracheophyta</taxon>
        <taxon>Lycopodiopsida</taxon>
        <taxon>Lycopodiales</taxon>
        <taxon>Lycopodiaceae</taxon>
        <taxon>Huperzioideae</taxon>
        <taxon>Huperzia</taxon>
    </lineage>
</organism>
<geneLocation type="chloroplast"/>
<proteinExistence type="inferred from homology"/>
<protein>
    <recommendedName>
        <fullName evidence="1">NAD(P)H-quinone oxidoreductase subunit 4L, chloroplastic</fullName>
        <ecNumber evidence="1">7.1.1.-</ecNumber>
    </recommendedName>
    <alternativeName>
        <fullName evidence="1">NAD(P)H dehydrogenase subunit 4L</fullName>
    </alternativeName>
    <alternativeName>
        <fullName evidence="1">NADH-plastoquinone oxidoreductase subunit 4L</fullName>
    </alternativeName>
</protein>
<feature type="chain" id="PRO_0000360334" description="NAD(P)H-quinone oxidoreductase subunit 4L, chloroplastic">
    <location>
        <begin position="1"/>
        <end position="100"/>
    </location>
</feature>
<feature type="transmembrane region" description="Helical" evidence="1">
    <location>
        <begin position="1"/>
        <end position="21"/>
    </location>
</feature>
<feature type="transmembrane region" description="Helical" evidence="1">
    <location>
        <begin position="29"/>
        <end position="49"/>
    </location>
</feature>
<feature type="transmembrane region" description="Helical" evidence="1">
    <location>
        <begin position="63"/>
        <end position="83"/>
    </location>
</feature>
<keyword id="KW-0150">Chloroplast</keyword>
<keyword id="KW-0472">Membrane</keyword>
<keyword id="KW-0520">NAD</keyword>
<keyword id="KW-0521">NADP</keyword>
<keyword id="KW-0934">Plastid</keyword>
<keyword id="KW-0618">Plastoquinone</keyword>
<keyword id="KW-0874">Quinone</keyword>
<keyword id="KW-0793">Thylakoid</keyword>
<keyword id="KW-1278">Translocase</keyword>
<keyword id="KW-0812">Transmembrane</keyword>
<keyword id="KW-1133">Transmembrane helix</keyword>
<keyword id="KW-0813">Transport</keyword>
<dbReference type="EC" id="7.1.1.-" evidence="1"/>
<dbReference type="EMBL" id="AY660566">
    <property type="protein sequence ID" value="AAT80761.1"/>
    <property type="molecule type" value="Genomic_DNA"/>
</dbReference>
<dbReference type="RefSeq" id="YP_209565.1">
    <property type="nucleotide sequence ID" value="NC_006861.1"/>
</dbReference>
<dbReference type="SMR" id="Q5SCZ8"/>
<dbReference type="GeneID" id="3283712"/>
<dbReference type="GO" id="GO:0009535">
    <property type="term" value="C:chloroplast thylakoid membrane"/>
    <property type="evidence" value="ECO:0007669"/>
    <property type="project" value="UniProtKB-SubCell"/>
</dbReference>
<dbReference type="GO" id="GO:0030964">
    <property type="term" value="C:NADH dehydrogenase complex"/>
    <property type="evidence" value="ECO:0007669"/>
    <property type="project" value="TreeGrafter"/>
</dbReference>
<dbReference type="GO" id="GO:0016655">
    <property type="term" value="F:oxidoreductase activity, acting on NAD(P)H, quinone or similar compound as acceptor"/>
    <property type="evidence" value="ECO:0007669"/>
    <property type="project" value="UniProtKB-UniRule"/>
</dbReference>
<dbReference type="GO" id="GO:0048038">
    <property type="term" value="F:quinone binding"/>
    <property type="evidence" value="ECO:0007669"/>
    <property type="project" value="UniProtKB-KW"/>
</dbReference>
<dbReference type="GO" id="GO:0042773">
    <property type="term" value="P:ATP synthesis coupled electron transport"/>
    <property type="evidence" value="ECO:0007669"/>
    <property type="project" value="InterPro"/>
</dbReference>
<dbReference type="GO" id="GO:0019684">
    <property type="term" value="P:photosynthesis, light reaction"/>
    <property type="evidence" value="ECO:0007669"/>
    <property type="project" value="UniProtKB-UniRule"/>
</dbReference>
<dbReference type="FunFam" id="1.10.287.3510:FF:000001">
    <property type="entry name" value="NADH-quinone oxidoreductase subunit K"/>
    <property type="match status" value="1"/>
</dbReference>
<dbReference type="Gene3D" id="1.10.287.3510">
    <property type="match status" value="1"/>
</dbReference>
<dbReference type="HAMAP" id="MF_01456">
    <property type="entry name" value="NDH1_NuoK"/>
    <property type="match status" value="1"/>
</dbReference>
<dbReference type="InterPro" id="IPR001133">
    <property type="entry name" value="NADH_UbQ_OxRdtase_chain4L/K"/>
</dbReference>
<dbReference type="InterPro" id="IPR039428">
    <property type="entry name" value="NUOK/Mnh_C1-like"/>
</dbReference>
<dbReference type="NCBIfam" id="NF004320">
    <property type="entry name" value="PRK05715.1-2"/>
    <property type="match status" value="1"/>
</dbReference>
<dbReference type="NCBIfam" id="NF004322">
    <property type="entry name" value="PRK05715.1-4"/>
    <property type="match status" value="1"/>
</dbReference>
<dbReference type="PANTHER" id="PTHR11434:SF16">
    <property type="entry name" value="NADH-UBIQUINONE OXIDOREDUCTASE CHAIN 4L"/>
    <property type="match status" value="1"/>
</dbReference>
<dbReference type="PANTHER" id="PTHR11434">
    <property type="entry name" value="NADH-UBIQUINONE OXIDOREDUCTASE SUBUNIT ND4L"/>
    <property type="match status" value="1"/>
</dbReference>
<dbReference type="Pfam" id="PF00420">
    <property type="entry name" value="Oxidored_q2"/>
    <property type="match status" value="1"/>
</dbReference>